<evidence type="ECO:0000305" key="1"/>
<accession>Q9YDM3</accession>
<keyword id="KW-1185">Reference proteome</keyword>
<protein>
    <recommendedName>
        <fullName>UPF0175 protein APE_0890a.1</fullName>
    </recommendedName>
</protein>
<reference key="1">
    <citation type="journal article" date="1999" name="DNA Res.">
        <title>Complete genome sequence of an aerobic hyper-thermophilic crenarchaeon, Aeropyrum pernix K1.</title>
        <authorList>
            <person name="Kawarabayasi Y."/>
            <person name="Hino Y."/>
            <person name="Horikawa H."/>
            <person name="Yamazaki S."/>
            <person name="Haikawa Y."/>
            <person name="Jin-no K."/>
            <person name="Takahashi M."/>
            <person name="Sekine M."/>
            <person name="Baba S."/>
            <person name="Ankai A."/>
            <person name="Kosugi H."/>
            <person name="Hosoyama A."/>
            <person name="Fukui S."/>
            <person name="Nagai Y."/>
            <person name="Nishijima K."/>
            <person name="Nakazawa H."/>
            <person name="Takamiya M."/>
            <person name="Masuda S."/>
            <person name="Funahashi T."/>
            <person name="Tanaka T."/>
            <person name="Kudoh Y."/>
            <person name="Yamazaki J."/>
            <person name="Kushida N."/>
            <person name="Oguchi A."/>
            <person name="Aoki K."/>
            <person name="Kubota K."/>
            <person name="Nakamura Y."/>
            <person name="Nomura N."/>
            <person name="Sako Y."/>
            <person name="Kikuchi H."/>
        </authorList>
    </citation>
    <scope>NUCLEOTIDE SEQUENCE [LARGE SCALE GENOMIC DNA]</scope>
    <source>
        <strain>ATCC 700893 / DSM 11879 / JCM 9820 / NBRC 100138 / K1</strain>
    </source>
</reference>
<proteinExistence type="inferred from homology"/>
<dbReference type="EMBL" id="BA000002">
    <property type="protein sequence ID" value="BAA79874.2"/>
    <property type="molecule type" value="Genomic_DNA"/>
</dbReference>
<dbReference type="PIR" id="B72684">
    <property type="entry name" value="B72684"/>
</dbReference>
<dbReference type="RefSeq" id="WP_010866051.1">
    <property type="nucleotide sequence ID" value="NC_000854.2"/>
</dbReference>
<dbReference type="SMR" id="Q9YDM3"/>
<dbReference type="EnsemblBacteria" id="BAA79874">
    <property type="protein sequence ID" value="BAA79874"/>
    <property type="gene ID" value="APE_0890a.1"/>
</dbReference>
<dbReference type="KEGG" id="ape:APE_0890a.1"/>
<dbReference type="eggNOG" id="arCOG00722">
    <property type="taxonomic scope" value="Archaea"/>
</dbReference>
<dbReference type="Proteomes" id="UP000002518">
    <property type="component" value="Chromosome"/>
</dbReference>
<dbReference type="InterPro" id="IPR005368">
    <property type="entry name" value="UPF0175"/>
</dbReference>
<dbReference type="InterPro" id="IPR052264">
    <property type="entry name" value="UPF0175_domain"/>
</dbReference>
<dbReference type="PANTHER" id="PTHR37525">
    <property type="entry name" value="UPF0175 PROTEIN SSL1255"/>
    <property type="match status" value="1"/>
</dbReference>
<dbReference type="PANTHER" id="PTHR37525:SF1">
    <property type="entry name" value="UPF0175 PROTEIN SSL1255"/>
    <property type="match status" value="1"/>
</dbReference>
<dbReference type="Pfam" id="PF03683">
    <property type="entry name" value="UPF0175"/>
    <property type="match status" value="1"/>
</dbReference>
<organism>
    <name type="scientific">Aeropyrum pernix (strain ATCC 700893 / DSM 11879 / JCM 9820 / NBRC 100138 / K1)</name>
    <dbReference type="NCBI Taxonomy" id="272557"/>
    <lineage>
        <taxon>Archaea</taxon>
        <taxon>Thermoproteota</taxon>
        <taxon>Thermoprotei</taxon>
        <taxon>Desulfurococcales</taxon>
        <taxon>Desulfurococcaceae</taxon>
        <taxon>Aeropyrum</taxon>
    </lineage>
</organism>
<sequence length="79" mass="9173">MSREVVVKVKVPSHYVGDIEREVKLAYAVDLFLRGIVSVERAAELAGMSLYDFLVELRRRRIQAYPYSDEELREELGIE</sequence>
<feature type="chain" id="PRO_0000159024" description="UPF0175 protein APE_0890a.1">
    <location>
        <begin position="1"/>
        <end position="79"/>
    </location>
</feature>
<gene>
    <name type="ordered locus">APE_0890a.1</name>
    <name type="ORF">APES040</name>
</gene>
<name>Y040_AERPE</name>
<comment type="similarity">
    <text evidence="1">Belongs to the UPF0175 family.</text>
</comment>